<accession>P24902</accession>
<sequence length="161" mass="17839">KLAYVALDYEQELETSKSSSSQEKNYELPDGQVITVGAERFRCAEVLFQPSLIGMEAAGIHETTYNSIMKCDVDIRKDLYGNIVLSGGSTMFPGIADRMSKEITALAPSSMKIKVVAPPERKYSVWIGGSILASLSTFQQMWIAKTEYEESGPSIVHRKCF</sequence>
<evidence type="ECO:0000250" key="1">
    <source>
        <dbReference type="UniProtKB" id="P68137"/>
    </source>
</evidence>
<evidence type="ECO:0000305" key="2"/>
<name>ACT_PINCO</name>
<dbReference type="EC" id="3.6.4.-" evidence="1"/>
<dbReference type="EMBL" id="M36171">
    <property type="protein sequence ID" value="AAA33775.1"/>
    <property type="molecule type" value="Genomic_DNA"/>
</dbReference>
<dbReference type="PIR" id="S26039">
    <property type="entry name" value="S26039"/>
</dbReference>
<dbReference type="SMR" id="P24902"/>
<dbReference type="GO" id="GO:0005737">
    <property type="term" value="C:cytoplasm"/>
    <property type="evidence" value="ECO:0007669"/>
    <property type="project" value="UniProtKB-KW"/>
</dbReference>
<dbReference type="GO" id="GO:0005856">
    <property type="term" value="C:cytoskeleton"/>
    <property type="evidence" value="ECO:0007669"/>
    <property type="project" value="UniProtKB-SubCell"/>
</dbReference>
<dbReference type="GO" id="GO:0005524">
    <property type="term" value="F:ATP binding"/>
    <property type="evidence" value="ECO:0007669"/>
    <property type="project" value="UniProtKB-KW"/>
</dbReference>
<dbReference type="GO" id="GO:0016787">
    <property type="term" value="F:hydrolase activity"/>
    <property type="evidence" value="ECO:0007669"/>
    <property type="project" value="UniProtKB-KW"/>
</dbReference>
<dbReference type="FunFam" id="3.30.420.40:FF:000404">
    <property type="entry name" value="Major actin"/>
    <property type="match status" value="1"/>
</dbReference>
<dbReference type="FunFam" id="3.30.420.40:FF:000058">
    <property type="entry name" value="Putative actin-related protein 5"/>
    <property type="match status" value="1"/>
</dbReference>
<dbReference type="Gene3D" id="3.30.420.40">
    <property type="match status" value="2"/>
</dbReference>
<dbReference type="Gene3D" id="3.90.640.10">
    <property type="entry name" value="Actin, Chain A, domain 4"/>
    <property type="match status" value="1"/>
</dbReference>
<dbReference type="InterPro" id="IPR004000">
    <property type="entry name" value="Actin"/>
</dbReference>
<dbReference type="InterPro" id="IPR004001">
    <property type="entry name" value="Actin_CS"/>
</dbReference>
<dbReference type="InterPro" id="IPR043129">
    <property type="entry name" value="ATPase_NBD"/>
</dbReference>
<dbReference type="PANTHER" id="PTHR11937">
    <property type="entry name" value="ACTIN"/>
    <property type="match status" value="1"/>
</dbReference>
<dbReference type="Pfam" id="PF00022">
    <property type="entry name" value="Actin"/>
    <property type="match status" value="1"/>
</dbReference>
<dbReference type="SMART" id="SM00268">
    <property type="entry name" value="ACTIN"/>
    <property type="match status" value="1"/>
</dbReference>
<dbReference type="SUPFAM" id="SSF53067">
    <property type="entry name" value="Actin-like ATPase domain"/>
    <property type="match status" value="1"/>
</dbReference>
<dbReference type="PROSITE" id="PS00432">
    <property type="entry name" value="ACTINS_2"/>
    <property type="match status" value="1"/>
</dbReference>
<feature type="chain" id="PRO_0000088992" description="Actin">
    <location>
        <begin position="1" status="less than"/>
        <end position="161"/>
    </location>
</feature>
<feature type="non-terminal residue">
    <location>
        <position position="1"/>
    </location>
</feature>
<comment type="function">
    <text>Actins are highly conserved proteins that are involved in various types of cell motility and are ubiquitously expressed in all eukaryotic cells.</text>
</comment>
<comment type="catalytic activity">
    <reaction evidence="1">
        <text>ATP + H2O = ADP + phosphate + H(+)</text>
        <dbReference type="Rhea" id="RHEA:13065"/>
        <dbReference type="ChEBI" id="CHEBI:15377"/>
        <dbReference type="ChEBI" id="CHEBI:15378"/>
        <dbReference type="ChEBI" id="CHEBI:30616"/>
        <dbReference type="ChEBI" id="CHEBI:43474"/>
        <dbReference type="ChEBI" id="CHEBI:456216"/>
    </reaction>
</comment>
<comment type="subcellular location">
    <subcellularLocation>
        <location>Cytoplasm</location>
        <location>Cytoskeleton</location>
    </subcellularLocation>
</comment>
<comment type="similarity">
    <text evidence="2">Belongs to the actin family.</text>
</comment>
<reference key="1">
    <citation type="journal article" date="1988" name="Can. J. For. Res.">
        <title>Nucleotide sequence of the carboxy-terminal portion of a lodgepole pine actin gene.</title>
        <authorList>
            <person name="Kenny J.R."/>
            <person name="Dancik B.P."/>
            <person name="Florence L.Z."/>
            <person name="Nargang F.E."/>
        </authorList>
    </citation>
    <scope>NUCLEOTIDE SEQUENCE [GENOMIC DNA]</scope>
</reference>
<proteinExistence type="inferred from homology"/>
<organism>
    <name type="scientific">Pinus contorta</name>
    <name type="common">Shore pine</name>
    <name type="synonym">Lodgepole pine</name>
    <dbReference type="NCBI Taxonomy" id="3339"/>
    <lineage>
        <taxon>Eukaryota</taxon>
        <taxon>Viridiplantae</taxon>
        <taxon>Streptophyta</taxon>
        <taxon>Embryophyta</taxon>
        <taxon>Tracheophyta</taxon>
        <taxon>Spermatophyta</taxon>
        <taxon>Pinopsida</taxon>
        <taxon>Pinidae</taxon>
        <taxon>Conifers I</taxon>
        <taxon>Pinales</taxon>
        <taxon>Pinaceae</taxon>
        <taxon>Pinus</taxon>
        <taxon>Pinus subgen. Pinus</taxon>
    </lineage>
</organism>
<keyword id="KW-0067">ATP-binding</keyword>
<keyword id="KW-0963">Cytoplasm</keyword>
<keyword id="KW-0206">Cytoskeleton</keyword>
<keyword id="KW-0378">Hydrolase</keyword>
<keyword id="KW-0547">Nucleotide-binding</keyword>
<protein>
    <recommendedName>
        <fullName>Actin</fullName>
        <ecNumber evidence="1">3.6.4.-</ecNumber>
    </recommendedName>
</protein>